<organism>
    <name type="scientific">Staphylococcus aureus (strain COL)</name>
    <dbReference type="NCBI Taxonomy" id="93062"/>
    <lineage>
        <taxon>Bacteria</taxon>
        <taxon>Bacillati</taxon>
        <taxon>Bacillota</taxon>
        <taxon>Bacilli</taxon>
        <taxon>Bacillales</taxon>
        <taxon>Staphylococcaceae</taxon>
        <taxon>Staphylococcus</taxon>
    </lineage>
</organism>
<dbReference type="EC" id="3.5.1.-"/>
<dbReference type="EMBL" id="CP000046">
    <property type="protein sequence ID" value="AAW36793.1"/>
    <property type="molecule type" value="Genomic_DNA"/>
</dbReference>
<dbReference type="RefSeq" id="WP_000717800.1">
    <property type="nucleotide sequence ID" value="NZ_JBGOFO010000003.1"/>
</dbReference>
<dbReference type="SMR" id="Q5HFD1"/>
<dbReference type="KEGG" id="sac:SACOL1687"/>
<dbReference type="HOGENOM" id="CLU_014322_1_1_9"/>
<dbReference type="Proteomes" id="UP000000530">
    <property type="component" value="Chromosome"/>
</dbReference>
<dbReference type="GO" id="GO:0005576">
    <property type="term" value="C:extracellular region"/>
    <property type="evidence" value="ECO:0007669"/>
    <property type="project" value="UniProtKB-SubCell"/>
</dbReference>
<dbReference type="GO" id="GO:0030288">
    <property type="term" value="C:outer membrane-bounded periplasmic space"/>
    <property type="evidence" value="ECO:0007669"/>
    <property type="project" value="TreeGrafter"/>
</dbReference>
<dbReference type="GO" id="GO:0008745">
    <property type="term" value="F:N-acetylmuramoyl-L-alanine amidase activity"/>
    <property type="evidence" value="ECO:0007669"/>
    <property type="project" value="InterPro"/>
</dbReference>
<dbReference type="GO" id="GO:0071555">
    <property type="term" value="P:cell wall organization"/>
    <property type="evidence" value="ECO:0007669"/>
    <property type="project" value="UniProtKB-KW"/>
</dbReference>
<dbReference type="GO" id="GO:0009253">
    <property type="term" value="P:peptidoglycan catabolic process"/>
    <property type="evidence" value="ECO:0007669"/>
    <property type="project" value="InterPro"/>
</dbReference>
<dbReference type="CDD" id="cd02696">
    <property type="entry name" value="MurNAc-LAA"/>
    <property type="match status" value="1"/>
</dbReference>
<dbReference type="Gene3D" id="2.30.30.40">
    <property type="entry name" value="SH3 Domains"/>
    <property type="match status" value="1"/>
</dbReference>
<dbReference type="Gene3D" id="3.40.630.40">
    <property type="entry name" value="Zn-dependent exopeptidases"/>
    <property type="match status" value="1"/>
</dbReference>
<dbReference type="InterPro" id="IPR017273">
    <property type="entry name" value="LytH"/>
</dbReference>
<dbReference type="InterPro" id="IPR002508">
    <property type="entry name" value="MurNAc-LAA_cat"/>
</dbReference>
<dbReference type="InterPro" id="IPR050695">
    <property type="entry name" value="N-acetylmuramoyl_amidase_3"/>
</dbReference>
<dbReference type="InterPro" id="IPR003646">
    <property type="entry name" value="SH3-like_bac-type"/>
</dbReference>
<dbReference type="PANTHER" id="PTHR30404:SF7">
    <property type="entry name" value="CELL WALL AMIDASE LYTH-RELATED"/>
    <property type="match status" value="1"/>
</dbReference>
<dbReference type="PANTHER" id="PTHR30404">
    <property type="entry name" value="N-ACETYLMURAMOYL-L-ALANINE AMIDASE"/>
    <property type="match status" value="1"/>
</dbReference>
<dbReference type="Pfam" id="PF01520">
    <property type="entry name" value="Amidase_3"/>
    <property type="match status" value="1"/>
</dbReference>
<dbReference type="Pfam" id="PF08239">
    <property type="entry name" value="SH3_3"/>
    <property type="match status" value="1"/>
</dbReference>
<dbReference type="PIRSF" id="PIRSF037730">
    <property type="entry name" value="CWA_LytH_prd"/>
    <property type="match status" value="1"/>
</dbReference>
<dbReference type="SMART" id="SM00646">
    <property type="entry name" value="Ami_3"/>
    <property type="match status" value="1"/>
</dbReference>
<dbReference type="SMART" id="SM00287">
    <property type="entry name" value="SH3b"/>
    <property type="match status" value="1"/>
</dbReference>
<dbReference type="SUPFAM" id="SSF53187">
    <property type="entry name" value="Zn-dependent exopeptidases"/>
    <property type="match status" value="1"/>
</dbReference>
<dbReference type="PROSITE" id="PS51781">
    <property type="entry name" value="SH3B"/>
    <property type="match status" value="1"/>
</dbReference>
<comment type="function">
    <text evidence="1">Probably involved in cell-wall metabolism.</text>
</comment>
<comment type="subcellular location">
    <subcellularLocation>
        <location evidence="5">Secreted</location>
    </subcellularLocation>
</comment>
<comment type="similarity">
    <text evidence="5">Belongs to the N-acetylmuramoyl-L-alanine amidase 3 family.</text>
</comment>
<feature type="signal peptide" evidence="2">
    <location>
        <begin position="1"/>
        <end position="40"/>
    </location>
</feature>
<feature type="chain" id="PRO_0000226281" description="Probable cell wall amidase LytH">
    <location>
        <begin position="41"/>
        <end position="291"/>
    </location>
</feature>
<feature type="domain" description="SH3b" evidence="3">
    <location>
        <begin position="41"/>
        <end position="105"/>
    </location>
</feature>
<feature type="domain" description="MurNAc-LAA" evidence="2">
    <location>
        <begin position="122"/>
        <end position="286"/>
    </location>
</feature>
<feature type="region of interest" description="Disordered" evidence="4">
    <location>
        <begin position="118"/>
        <end position="140"/>
    </location>
</feature>
<protein>
    <recommendedName>
        <fullName>Probable cell wall amidase LytH</fullName>
        <ecNumber>3.5.1.-</ecNumber>
    </recommendedName>
</protein>
<gene>
    <name type="primary">lytH</name>
    <name type="ordered locus">SACOL1687</name>
</gene>
<keyword id="KW-0961">Cell wall biogenesis/degradation</keyword>
<keyword id="KW-0378">Hydrolase</keyword>
<keyword id="KW-0964">Secreted</keyword>
<keyword id="KW-0732">Signal</keyword>
<reference key="1">
    <citation type="journal article" date="2005" name="J. Bacteriol.">
        <title>Insights on evolution of virulence and resistance from the complete genome analysis of an early methicillin-resistant Staphylococcus aureus strain and a biofilm-producing methicillin-resistant Staphylococcus epidermidis strain.</title>
        <authorList>
            <person name="Gill S.R."/>
            <person name="Fouts D.E."/>
            <person name="Archer G.L."/>
            <person name="Mongodin E.F."/>
            <person name="DeBoy R.T."/>
            <person name="Ravel J."/>
            <person name="Paulsen I.T."/>
            <person name="Kolonay J.F."/>
            <person name="Brinkac L.M."/>
            <person name="Beanan M.J."/>
            <person name="Dodson R.J."/>
            <person name="Daugherty S.C."/>
            <person name="Madupu R."/>
            <person name="Angiuoli S.V."/>
            <person name="Durkin A.S."/>
            <person name="Haft D.H."/>
            <person name="Vamathevan J.J."/>
            <person name="Khouri H."/>
            <person name="Utterback T.R."/>
            <person name="Lee C."/>
            <person name="Dimitrov G."/>
            <person name="Jiang L."/>
            <person name="Qin H."/>
            <person name="Weidman J."/>
            <person name="Tran K."/>
            <person name="Kang K.H."/>
            <person name="Hance I.R."/>
            <person name="Nelson K.E."/>
            <person name="Fraser C.M."/>
        </authorList>
    </citation>
    <scope>NUCLEOTIDE SEQUENCE [LARGE SCALE GENOMIC DNA]</scope>
    <source>
        <strain>COL</strain>
    </source>
</reference>
<accession>Q5HFD1</accession>
<sequence length="291" mass="32694">MKKIEAWLSKKGLKNKRTLIVVIAFVLFIIFLFLLLNSNSEDSGNITITENAELRTGPNAAYPVIYKVEKGDHFKKIGKVGKWIEVEDTSSNEKGWIAGWHTNLDIVADNTKEKNPLQGKTIVLDPGHGGSDQGASSNTKYKSLEKDYTLKTAKELQRTLEKEGATVKMTRTDDTYVSLENRDIKGDAYLSIHNDALESSNANGMTVYWYHDNQRALADTLDATIQKKGLLSNRGSRQENYQVLRQTKVPAVLLELGYISNPTDETMIKDQLHRQILEQAIVDGLKIYFSA</sequence>
<proteinExistence type="inferred from homology"/>
<name>LYTH_STAAC</name>
<evidence type="ECO:0000250" key="1"/>
<evidence type="ECO:0000255" key="2"/>
<evidence type="ECO:0000255" key="3">
    <source>
        <dbReference type="PROSITE-ProRule" id="PRU01117"/>
    </source>
</evidence>
<evidence type="ECO:0000256" key="4">
    <source>
        <dbReference type="SAM" id="MobiDB-lite"/>
    </source>
</evidence>
<evidence type="ECO:0000305" key="5"/>